<reference key="1">
    <citation type="journal article" date="1996" name="Genes Dev.">
        <title>Insertional mutagenesis in zebrafish identifies two novel genes, pescadillo and dead eye, essential for embryonic development.</title>
        <authorList>
            <person name="Allende M.L."/>
            <person name="Amsterdam A."/>
            <person name="Becker T."/>
            <person name="Kawakami K."/>
            <person name="Gaiano N."/>
            <person name="Hopkins N."/>
        </authorList>
    </citation>
    <scope>NUCLEOTIDE SEQUENCE [MRNA]</scope>
    <scope>DEVELOPMENTAL STAGE</scope>
    <scope>DISRUPTION PHENOTYPE</scope>
</reference>
<reference key="2">
    <citation type="journal article" date="2013" name="Nature">
        <title>The zebrafish reference genome sequence and its relationship to the human genome.</title>
        <authorList>
            <person name="Howe K."/>
            <person name="Clark M.D."/>
            <person name="Torroja C.F."/>
            <person name="Torrance J."/>
            <person name="Berthelot C."/>
            <person name="Muffato M."/>
            <person name="Collins J.E."/>
            <person name="Humphray S."/>
            <person name="McLaren K."/>
            <person name="Matthews L."/>
            <person name="McLaren S."/>
            <person name="Sealy I."/>
            <person name="Caccamo M."/>
            <person name="Churcher C."/>
            <person name="Scott C."/>
            <person name="Barrett J.C."/>
            <person name="Koch R."/>
            <person name="Rauch G.J."/>
            <person name="White S."/>
            <person name="Chow W."/>
            <person name="Kilian B."/>
            <person name="Quintais L.T."/>
            <person name="Guerra-Assuncao J.A."/>
            <person name="Zhou Y."/>
            <person name="Gu Y."/>
            <person name="Yen J."/>
            <person name="Vogel J.H."/>
            <person name="Eyre T."/>
            <person name="Redmond S."/>
            <person name="Banerjee R."/>
            <person name="Chi J."/>
            <person name="Fu B."/>
            <person name="Langley E."/>
            <person name="Maguire S.F."/>
            <person name="Laird G.K."/>
            <person name="Lloyd D."/>
            <person name="Kenyon E."/>
            <person name="Donaldson S."/>
            <person name="Sehra H."/>
            <person name="Almeida-King J."/>
            <person name="Loveland J."/>
            <person name="Trevanion S."/>
            <person name="Jones M."/>
            <person name="Quail M."/>
            <person name="Willey D."/>
            <person name="Hunt A."/>
            <person name="Burton J."/>
            <person name="Sims S."/>
            <person name="McLay K."/>
            <person name="Plumb B."/>
            <person name="Davis J."/>
            <person name="Clee C."/>
            <person name="Oliver K."/>
            <person name="Clark R."/>
            <person name="Riddle C."/>
            <person name="Elliot D."/>
            <person name="Threadgold G."/>
            <person name="Harden G."/>
            <person name="Ware D."/>
            <person name="Begum S."/>
            <person name="Mortimore B."/>
            <person name="Kerry G."/>
            <person name="Heath P."/>
            <person name="Phillimore B."/>
            <person name="Tracey A."/>
            <person name="Corby N."/>
            <person name="Dunn M."/>
            <person name="Johnson C."/>
            <person name="Wood J."/>
            <person name="Clark S."/>
            <person name="Pelan S."/>
            <person name="Griffiths G."/>
            <person name="Smith M."/>
            <person name="Glithero R."/>
            <person name="Howden P."/>
            <person name="Barker N."/>
            <person name="Lloyd C."/>
            <person name="Stevens C."/>
            <person name="Harley J."/>
            <person name="Holt K."/>
            <person name="Panagiotidis G."/>
            <person name="Lovell J."/>
            <person name="Beasley H."/>
            <person name="Henderson C."/>
            <person name="Gordon D."/>
            <person name="Auger K."/>
            <person name="Wright D."/>
            <person name="Collins J."/>
            <person name="Raisen C."/>
            <person name="Dyer L."/>
            <person name="Leung K."/>
            <person name="Robertson L."/>
            <person name="Ambridge K."/>
            <person name="Leongamornlert D."/>
            <person name="McGuire S."/>
            <person name="Gilderthorp R."/>
            <person name="Griffiths C."/>
            <person name="Manthravadi D."/>
            <person name="Nichol S."/>
            <person name="Barker G."/>
            <person name="Whitehead S."/>
            <person name="Kay M."/>
            <person name="Brown J."/>
            <person name="Murnane C."/>
            <person name="Gray E."/>
            <person name="Humphries M."/>
            <person name="Sycamore N."/>
            <person name="Barker D."/>
            <person name="Saunders D."/>
            <person name="Wallis J."/>
            <person name="Babbage A."/>
            <person name="Hammond S."/>
            <person name="Mashreghi-Mohammadi M."/>
            <person name="Barr L."/>
            <person name="Martin S."/>
            <person name="Wray P."/>
            <person name="Ellington A."/>
            <person name="Matthews N."/>
            <person name="Ellwood M."/>
            <person name="Woodmansey R."/>
            <person name="Clark G."/>
            <person name="Cooper J."/>
            <person name="Tromans A."/>
            <person name="Grafham D."/>
            <person name="Skuce C."/>
            <person name="Pandian R."/>
            <person name="Andrews R."/>
            <person name="Harrison E."/>
            <person name="Kimberley A."/>
            <person name="Garnett J."/>
            <person name="Fosker N."/>
            <person name="Hall R."/>
            <person name="Garner P."/>
            <person name="Kelly D."/>
            <person name="Bird C."/>
            <person name="Palmer S."/>
            <person name="Gehring I."/>
            <person name="Berger A."/>
            <person name="Dooley C.M."/>
            <person name="Ersan-Urun Z."/>
            <person name="Eser C."/>
            <person name="Geiger H."/>
            <person name="Geisler M."/>
            <person name="Karotki L."/>
            <person name="Kirn A."/>
            <person name="Konantz J."/>
            <person name="Konantz M."/>
            <person name="Oberlander M."/>
            <person name="Rudolph-Geiger S."/>
            <person name="Teucke M."/>
            <person name="Lanz C."/>
            <person name="Raddatz G."/>
            <person name="Osoegawa K."/>
            <person name="Zhu B."/>
            <person name="Rapp A."/>
            <person name="Widaa S."/>
            <person name="Langford C."/>
            <person name="Yang F."/>
            <person name="Schuster S.C."/>
            <person name="Carter N.P."/>
            <person name="Harrow J."/>
            <person name="Ning Z."/>
            <person name="Herrero J."/>
            <person name="Searle S.M."/>
            <person name="Enright A."/>
            <person name="Geisler R."/>
            <person name="Plasterk R.H."/>
            <person name="Lee C."/>
            <person name="Westerfield M."/>
            <person name="de Jong P.J."/>
            <person name="Zon L.I."/>
            <person name="Postlethwait J.H."/>
            <person name="Nusslein-Volhard C."/>
            <person name="Hubbard T.J."/>
            <person name="Roest Crollius H."/>
            <person name="Rogers J."/>
            <person name="Stemple D.L."/>
        </authorList>
    </citation>
    <scope>NUCLEOTIDE SEQUENCE [LARGE SCALE GENOMIC DNA]</scope>
    <source>
        <strain>Tuebingen</strain>
    </source>
</reference>
<reference key="3">
    <citation type="submission" date="2008-03" db="EMBL/GenBank/DDBJ databases">
        <authorList>
            <consortium name="NIH - Zebrafish Gene Collection (ZGC) project"/>
        </authorList>
    </citation>
    <scope>NUCLEOTIDE SEQUENCE [LARGE SCALE MRNA]</scope>
</reference>
<reference key="4">
    <citation type="submission" date="2000-07" db="EMBL/GenBank/DDBJ databases">
        <title>The genomic sequence of the zebrafish pescadillo gene.</title>
        <authorList>
            <person name="Kawakami K."/>
            <person name="Grosshans H."/>
            <person name="Hopkins N."/>
        </authorList>
    </citation>
    <scope>NUCLEOTIDE SEQUENCE [GENOMIC DNA] OF 1-180</scope>
</reference>
<organism>
    <name type="scientific">Danio rerio</name>
    <name type="common">Zebrafish</name>
    <name type="synonym">Brachydanio rerio</name>
    <dbReference type="NCBI Taxonomy" id="7955"/>
    <lineage>
        <taxon>Eukaryota</taxon>
        <taxon>Metazoa</taxon>
        <taxon>Chordata</taxon>
        <taxon>Craniata</taxon>
        <taxon>Vertebrata</taxon>
        <taxon>Euteleostomi</taxon>
        <taxon>Actinopterygii</taxon>
        <taxon>Neopterygii</taxon>
        <taxon>Teleostei</taxon>
        <taxon>Ostariophysi</taxon>
        <taxon>Cypriniformes</taxon>
        <taxon>Danionidae</taxon>
        <taxon>Danioninae</taxon>
        <taxon>Danio</taxon>
    </lineage>
</organism>
<protein>
    <recommendedName>
        <fullName>Pescadillo</fullName>
    </recommendedName>
</protein>
<proteinExistence type="evidence at transcript level"/>
<name>PESC_DANRE</name>
<sequence length="583" mass="67898">MGGLQKKKYESGSATNYITRNKARKKLSLSLADFRRLCILKGIYPHEPKHKKKVNKGSTAARTYYLLKDIRFLLHEPIVGKFREYKIFVRKLRKAYGKAEWSAVERLKENKPGYKLDHIIKERYPTFIDALRDVDDALSMCFLFSTFARTGKCHVQTIQLCRRLSVEWMNYIISSRSLRKVFLSIKGIYYQAEVLGQTITWIVPYQFAHNHPTDVDYRVMATFTELYTTLLGFVNFRLYQTLNLVYPPKLDGQGEISLKAEFEEDYALESESYTEKLSALSASLARMVASVEEEEAELDHFPTEGEDQEKMEVREKMEQQQSKQKKLFEGLKFFLNREVPRESLAFVIRCFGGEVSWDKSLCIGSTYEATDETITHHIVDRPSMDKQYINRYYIQPQWVYDSVNAKIQLPVEEYFLGVTLPPHLSPFVEETEGDYVPPEKLKLMALQRGEKPQAEEDEEEEGEEEEDDEEDEEDDEQSEDEEEAEEEANLAEMEEKRSQGKSLSVKVTPGKAKAENRARAAEEEKAEEKRLAIMMMKKKEKYLYDKIMFGKKRKVREANKLAAKRKAHDDASKADKKKKKKKC</sequence>
<evidence type="ECO:0000255" key="1">
    <source>
        <dbReference type="HAMAP-Rule" id="MF_03028"/>
    </source>
</evidence>
<evidence type="ECO:0000256" key="2">
    <source>
        <dbReference type="SAM" id="MobiDB-lite"/>
    </source>
</evidence>
<evidence type="ECO:0000269" key="3">
    <source>
    </source>
</evidence>
<evidence type="ECO:0000305" key="4"/>
<comment type="function">
    <text evidence="1">Component of the PeBoW complex, which is required for maturation of 28S and 5.8S ribosomal RNAs and formation of the 60S ribosome.</text>
</comment>
<comment type="subunit">
    <text evidence="1">Component of the PeBoW complex, composed of bop1, pes1 and wdr12. The complex is held together by bop1, which interacts with pes1 via its N-terminal domain and with wdr12 via a high-affinity interaction between the seven-bladed beta-propeller domains of the 2 proteins. The PeBoW complex associates with the 66S pre-ribosome.</text>
</comment>
<comment type="subcellular location">
    <subcellularLocation>
        <location evidence="1">Nucleus</location>
        <location evidence="1">Nucleolus</location>
    </subcellularLocation>
    <subcellularLocation>
        <location evidence="1">Nucleus</location>
        <location evidence="1">Nucleoplasm</location>
    </subcellularLocation>
</comment>
<comment type="developmental stage">
    <text evidence="3">Widely and highly expressed during the first 3 days of embryogenesis. Prominent sites of expression are the eyes and optic tectum on day 1, the fin buds, liver primordium, and gut on day 2, and the branchial arches on day 3.</text>
</comment>
<comment type="disruption phenotype">
    <text evidence="3">Embryos exhibit smaller eyes, a reduced brain and visceral skeleton, shortened fins and a lack of expansion of liver and gut, and die on day 6 of development.</text>
</comment>
<comment type="similarity">
    <text evidence="1">Belongs to the pescadillo family.</text>
</comment>
<gene>
    <name type="primary">pes</name>
    <name type="ORF">si:dkeyp-86g2.3</name>
</gene>
<keyword id="KW-0175">Coiled coil</keyword>
<keyword id="KW-0539">Nucleus</keyword>
<keyword id="KW-1185">Reference proteome</keyword>
<keyword id="KW-0690">Ribosome biogenesis</keyword>
<keyword id="KW-0698">rRNA processing</keyword>
<feature type="chain" id="PRO_0000186190" description="Pescadillo">
    <location>
        <begin position="1"/>
        <end position="583"/>
    </location>
</feature>
<feature type="domain" description="BRCT" evidence="1">
    <location>
        <begin position="323"/>
        <end position="416"/>
    </location>
</feature>
<feature type="region of interest" description="Disordered" evidence="2">
    <location>
        <begin position="448"/>
        <end position="526"/>
    </location>
</feature>
<feature type="region of interest" description="Disordered" evidence="2">
    <location>
        <begin position="558"/>
        <end position="583"/>
    </location>
</feature>
<feature type="coiled-coil region" evidence="1">
    <location>
        <begin position="275"/>
        <end position="329"/>
    </location>
</feature>
<feature type="compositionally biased region" description="Acidic residues" evidence="2">
    <location>
        <begin position="455"/>
        <end position="489"/>
    </location>
</feature>
<feature type="compositionally biased region" description="Basic and acidic residues" evidence="2">
    <location>
        <begin position="512"/>
        <end position="526"/>
    </location>
</feature>
<feature type="sequence conflict" description="In Ref. 3; AAH49339." evidence="4" ref="3">
    <original>K</original>
    <variation>R</variation>
    <location>
        <position position="49"/>
    </location>
</feature>
<feature type="sequence conflict" description="In Ref. 3; AAI60624." evidence="4" ref="3">
    <original>I</original>
    <variation>L</variation>
    <location>
        <position position="172"/>
    </location>
</feature>
<feature type="sequence conflict" description="In Ref. 3; AAI60624." evidence="4" ref="3">
    <original>I</original>
    <variation>V</variation>
    <location>
        <position position="199"/>
    </location>
</feature>
<feature type="sequence conflict" description="In Ref. 3; AAH49339." evidence="4" ref="3">
    <original>A</original>
    <variation>E</variation>
    <location>
        <position position="574"/>
    </location>
</feature>
<feature type="sequence conflict" description="In Ref. 1; AAB61138 and 3; AAH49339/AAI60624." evidence="4" ref="1 3">
    <location>
        <position position="576"/>
    </location>
</feature>
<dbReference type="EMBL" id="U77627">
    <property type="protein sequence ID" value="AAB61138.1"/>
    <property type="molecule type" value="mRNA"/>
</dbReference>
<dbReference type="EMBL" id="BX470167">
    <property type="protein sequence ID" value="CAM16783.2"/>
    <property type="molecule type" value="Genomic_DNA"/>
</dbReference>
<dbReference type="EMBL" id="CU459127">
    <property type="protein sequence ID" value="CAM16783.2"/>
    <property type="status" value="JOINED"/>
    <property type="molecule type" value="Genomic_DNA"/>
</dbReference>
<dbReference type="EMBL" id="CU459127">
    <property type="protein sequence ID" value="CAQ14501.1"/>
    <property type="molecule type" value="Genomic_DNA"/>
</dbReference>
<dbReference type="EMBL" id="BX470167">
    <property type="protein sequence ID" value="CAQ14501.1"/>
    <property type="status" value="JOINED"/>
    <property type="molecule type" value="Genomic_DNA"/>
</dbReference>
<dbReference type="EMBL" id="AB046115">
    <property type="protein sequence ID" value="BAB01764.1"/>
    <property type="molecule type" value="Genomic_DNA"/>
</dbReference>
<dbReference type="EMBL" id="BC049339">
    <property type="protein sequence ID" value="AAH49339.1"/>
    <property type="molecule type" value="mRNA"/>
</dbReference>
<dbReference type="EMBL" id="BC160624">
    <property type="protein sequence ID" value="AAI60624.1"/>
    <property type="molecule type" value="mRNA"/>
</dbReference>
<dbReference type="RefSeq" id="NP_571105.3">
    <property type="nucleotide sequence ID" value="NM_131030.3"/>
</dbReference>
<dbReference type="SMR" id="P79741"/>
<dbReference type="FunCoup" id="P79741">
    <property type="interactions" value="2452"/>
</dbReference>
<dbReference type="STRING" id="7955.ENSDARP00000026992"/>
<dbReference type="PaxDb" id="7955-ENSDARP00000026992"/>
<dbReference type="Ensembl" id="ENSDART00000023101">
    <property type="protein sequence ID" value="ENSDARP00000026992"/>
    <property type="gene ID" value="ENSDARG00000018902"/>
</dbReference>
<dbReference type="GeneID" id="30228"/>
<dbReference type="KEGG" id="dre:30228"/>
<dbReference type="AGR" id="ZFIN:ZDB-GENE-990415-206"/>
<dbReference type="CTD" id="30228"/>
<dbReference type="ZFIN" id="ZDB-GENE-990415-206">
    <property type="gene designation" value="pes"/>
</dbReference>
<dbReference type="eggNOG" id="KOG2481">
    <property type="taxonomic scope" value="Eukaryota"/>
</dbReference>
<dbReference type="HOGENOM" id="CLU_019619_0_0_1"/>
<dbReference type="InParanoid" id="P79741"/>
<dbReference type="OMA" id="QKVTWIV"/>
<dbReference type="OrthoDB" id="10264910at2759"/>
<dbReference type="PhylomeDB" id="P79741"/>
<dbReference type="TreeFam" id="TF300671"/>
<dbReference type="PRO" id="PR:P79741"/>
<dbReference type="Proteomes" id="UP000000437">
    <property type="component" value="Alternate scaffold 5"/>
</dbReference>
<dbReference type="Proteomes" id="UP000000437">
    <property type="component" value="Chromosome 5"/>
</dbReference>
<dbReference type="Bgee" id="ENSDARG00000018902">
    <property type="expression patterns" value="Expressed in gastrula and 47 other cell types or tissues"/>
</dbReference>
<dbReference type="GO" id="GO:0005730">
    <property type="term" value="C:nucleolus"/>
    <property type="evidence" value="ECO:0000250"/>
    <property type="project" value="UniProtKB"/>
</dbReference>
<dbReference type="GO" id="GO:0005654">
    <property type="term" value="C:nucleoplasm"/>
    <property type="evidence" value="ECO:0000250"/>
    <property type="project" value="UniProtKB"/>
</dbReference>
<dbReference type="GO" id="GO:0070545">
    <property type="term" value="C:PeBoW complex"/>
    <property type="evidence" value="ECO:0000250"/>
    <property type="project" value="UniProtKB"/>
</dbReference>
<dbReference type="GO" id="GO:0030687">
    <property type="term" value="C:preribosome, large subunit precursor"/>
    <property type="evidence" value="ECO:0000250"/>
    <property type="project" value="UniProtKB"/>
</dbReference>
<dbReference type="GO" id="GO:0043021">
    <property type="term" value="F:ribonucleoprotein complex binding"/>
    <property type="evidence" value="ECO:0007669"/>
    <property type="project" value="UniProtKB-UniRule"/>
</dbReference>
<dbReference type="GO" id="GO:0003723">
    <property type="term" value="F:RNA binding"/>
    <property type="evidence" value="ECO:0000318"/>
    <property type="project" value="GO_Central"/>
</dbReference>
<dbReference type="GO" id="GO:0031017">
    <property type="term" value="P:exocrine pancreas development"/>
    <property type="evidence" value="ECO:0000315"/>
    <property type="project" value="ZFIN"/>
</dbReference>
<dbReference type="GO" id="GO:0000466">
    <property type="term" value="P:maturation of 5.8S rRNA from tricistronic rRNA transcript (SSU-rRNA, 5.8S rRNA, LSU-rRNA)"/>
    <property type="evidence" value="ECO:0000250"/>
    <property type="project" value="UniProtKB"/>
</dbReference>
<dbReference type="GO" id="GO:0000463">
    <property type="term" value="P:maturation of LSU-rRNA from tricistronic rRNA transcript (SSU-rRNA, 5.8S rRNA, LSU-rRNA)"/>
    <property type="evidence" value="ECO:0000250"/>
    <property type="project" value="UniProtKB"/>
</dbReference>
<dbReference type="GO" id="GO:0048709">
    <property type="term" value="P:oligodendrocyte differentiation"/>
    <property type="evidence" value="ECO:0000315"/>
    <property type="project" value="ZFIN"/>
</dbReference>
<dbReference type="GO" id="GO:0051726">
    <property type="term" value="P:regulation of cell cycle"/>
    <property type="evidence" value="ECO:0000315"/>
    <property type="project" value="ZFIN"/>
</dbReference>
<dbReference type="CDD" id="cd17709">
    <property type="entry name" value="BRCT_pescadillo_like"/>
    <property type="match status" value="1"/>
</dbReference>
<dbReference type="FunFam" id="3.40.50.10190:FF:000002">
    <property type="entry name" value="Pescadillo homolog"/>
    <property type="match status" value="1"/>
</dbReference>
<dbReference type="Gene3D" id="3.40.50.10190">
    <property type="entry name" value="BRCT domain"/>
    <property type="match status" value="1"/>
</dbReference>
<dbReference type="HAMAP" id="MF_03028">
    <property type="entry name" value="Pescadillo"/>
    <property type="match status" value="1"/>
</dbReference>
<dbReference type="InterPro" id="IPR001357">
    <property type="entry name" value="BRCT_dom"/>
</dbReference>
<dbReference type="InterPro" id="IPR036420">
    <property type="entry name" value="BRCT_dom_sf"/>
</dbReference>
<dbReference type="InterPro" id="IPR010613">
    <property type="entry name" value="PES"/>
</dbReference>
<dbReference type="PANTHER" id="PTHR12221">
    <property type="entry name" value="PESCADILLO - RELATED"/>
    <property type="match status" value="1"/>
</dbReference>
<dbReference type="PANTHER" id="PTHR12221:SF6">
    <property type="entry name" value="PESCADILLO HOMOLOG"/>
    <property type="match status" value="1"/>
</dbReference>
<dbReference type="Pfam" id="PF16589">
    <property type="entry name" value="BRCT_2"/>
    <property type="match status" value="1"/>
</dbReference>
<dbReference type="Pfam" id="PF06732">
    <property type="entry name" value="Pescadillo_N"/>
    <property type="match status" value="1"/>
</dbReference>
<dbReference type="SMART" id="SM00292">
    <property type="entry name" value="BRCT"/>
    <property type="match status" value="1"/>
</dbReference>
<dbReference type="SUPFAM" id="SSF52113">
    <property type="entry name" value="BRCT domain"/>
    <property type="match status" value="1"/>
</dbReference>
<dbReference type="PROSITE" id="PS50172">
    <property type="entry name" value="BRCT"/>
    <property type="match status" value="1"/>
</dbReference>
<accession>P79741</accession>
<accession>A2BGH4</accession>
<accession>B1H1I9</accession>
<accession>Q7ZU09</accession>
<accession>Q9I906</accession>